<feature type="chain" id="PRO_0000084875" description="Probable transporter mch1">
    <location>
        <begin position="1"/>
        <end position="598"/>
    </location>
</feature>
<feature type="transmembrane region" description="Helical" evidence="2">
    <location>
        <begin position="63"/>
        <end position="83"/>
    </location>
</feature>
<feature type="transmembrane region" description="Helical" evidence="2">
    <location>
        <begin position="96"/>
        <end position="116"/>
    </location>
</feature>
<feature type="transmembrane region" description="Helical" evidence="2">
    <location>
        <begin position="122"/>
        <end position="142"/>
    </location>
</feature>
<feature type="transmembrane region" description="Helical" evidence="2">
    <location>
        <begin position="164"/>
        <end position="184"/>
    </location>
</feature>
<feature type="transmembrane region" description="Helical" evidence="2">
    <location>
        <begin position="202"/>
        <end position="222"/>
    </location>
</feature>
<feature type="transmembrane region" description="Helical" evidence="2">
    <location>
        <begin position="241"/>
        <end position="261"/>
    </location>
</feature>
<feature type="transmembrane region" description="Helical" evidence="2">
    <location>
        <begin position="355"/>
        <end position="375"/>
    </location>
</feature>
<feature type="transmembrane region" description="Helical" evidence="2">
    <location>
        <begin position="405"/>
        <end position="425"/>
    </location>
</feature>
<feature type="transmembrane region" description="Helical" evidence="2">
    <location>
        <begin position="453"/>
        <end position="473"/>
    </location>
</feature>
<feature type="transmembrane region" description="Helical" evidence="2">
    <location>
        <begin position="486"/>
        <end position="506"/>
    </location>
</feature>
<feature type="transmembrane region" description="Helical" evidence="2">
    <location>
        <begin position="516"/>
        <end position="536"/>
    </location>
</feature>
<feature type="transmembrane region" description="Helical" evidence="2">
    <location>
        <begin position="565"/>
        <end position="585"/>
    </location>
</feature>
<feature type="region of interest" description="Disordered" evidence="3">
    <location>
        <begin position="1"/>
        <end position="49"/>
    </location>
</feature>
<feature type="region of interest" description="Disordered" evidence="3">
    <location>
        <begin position="315"/>
        <end position="334"/>
    </location>
</feature>
<feature type="compositionally biased region" description="Low complexity" evidence="3">
    <location>
        <begin position="22"/>
        <end position="37"/>
    </location>
</feature>
<feature type="glycosylation site" description="N-linked (GlcNAc...) asparagine" evidence="2">
    <location>
        <position position="57"/>
    </location>
</feature>
<feature type="glycosylation site" description="N-linked (GlcNAc...) asparagine" evidence="2">
    <location>
        <position position="325"/>
    </location>
</feature>
<accession>Q9P3K8</accession>
<accession>V5IPV0</accession>
<comment type="function">
    <text evidence="1">Probable transporter.</text>
</comment>
<comment type="subcellular location">
    <subcellularLocation>
        <location evidence="1">Vacuole membrane</location>
        <topology evidence="1">Multi-pass membrane protein</topology>
    </subcellularLocation>
</comment>
<comment type="similarity">
    <text evidence="4">Belongs to the major facilitator superfamily.</text>
</comment>
<proteinExistence type="inferred from homology"/>
<organism>
    <name type="scientific">Neurospora crassa (strain ATCC 24698 / 74-OR23-1A / CBS 708.71 / DSM 1257 / FGSC 987)</name>
    <dbReference type="NCBI Taxonomy" id="367110"/>
    <lineage>
        <taxon>Eukaryota</taxon>
        <taxon>Fungi</taxon>
        <taxon>Dikarya</taxon>
        <taxon>Ascomycota</taxon>
        <taxon>Pezizomycotina</taxon>
        <taxon>Sordariomycetes</taxon>
        <taxon>Sordariomycetidae</taxon>
        <taxon>Sordariales</taxon>
        <taxon>Sordariaceae</taxon>
        <taxon>Neurospora</taxon>
    </lineage>
</organism>
<reference key="1">
    <citation type="journal article" date="2003" name="Nucleic Acids Res.">
        <title>What's in the genome of a filamentous fungus? Analysis of the Neurospora genome sequence.</title>
        <authorList>
            <person name="Mannhaupt G."/>
            <person name="Montrone C."/>
            <person name="Haase D."/>
            <person name="Mewes H.-W."/>
            <person name="Aign V."/>
            <person name="Hoheisel J.D."/>
            <person name="Fartmann B."/>
            <person name="Nyakatura G."/>
            <person name="Kempken F."/>
            <person name="Maier J."/>
            <person name="Schulte U."/>
        </authorList>
    </citation>
    <scope>NUCLEOTIDE SEQUENCE [LARGE SCALE GENOMIC DNA]</scope>
    <source>
        <strain>ATCC 24698 / 74-OR23-1A / CBS 708.71 / DSM 1257 / FGSC 987</strain>
    </source>
</reference>
<reference key="2">
    <citation type="journal article" date="2003" name="Nature">
        <title>The genome sequence of the filamentous fungus Neurospora crassa.</title>
        <authorList>
            <person name="Galagan J.E."/>
            <person name="Calvo S.E."/>
            <person name="Borkovich K.A."/>
            <person name="Selker E.U."/>
            <person name="Read N.D."/>
            <person name="Jaffe D.B."/>
            <person name="FitzHugh W."/>
            <person name="Ma L.-J."/>
            <person name="Smirnov S."/>
            <person name="Purcell S."/>
            <person name="Rehman B."/>
            <person name="Elkins T."/>
            <person name="Engels R."/>
            <person name="Wang S."/>
            <person name="Nielsen C.B."/>
            <person name="Butler J."/>
            <person name="Endrizzi M."/>
            <person name="Qui D."/>
            <person name="Ianakiev P."/>
            <person name="Bell-Pedersen D."/>
            <person name="Nelson M.A."/>
            <person name="Werner-Washburne M."/>
            <person name="Selitrennikoff C.P."/>
            <person name="Kinsey J.A."/>
            <person name="Braun E.L."/>
            <person name="Zelter A."/>
            <person name="Schulte U."/>
            <person name="Kothe G.O."/>
            <person name="Jedd G."/>
            <person name="Mewes H.-W."/>
            <person name="Staben C."/>
            <person name="Marcotte E."/>
            <person name="Greenberg D."/>
            <person name="Roy A."/>
            <person name="Foley K."/>
            <person name="Naylor J."/>
            <person name="Stange-Thomann N."/>
            <person name="Barrett R."/>
            <person name="Gnerre S."/>
            <person name="Kamal M."/>
            <person name="Kamvysselis M."/>
            <person name="Mauceli E.W."/>
            <person name="Bielke C."/>
            <person name="Rudd S."/>
            <person name="Frishman D."/>
            <person name="Krystofova S."/>
            <person name="Rasmussen C."/>
            <person name="Metzenberg R.L."/>
            <person name="Perkins D.D."/>
            <person name="Kroken S."/>
            <person name="Cogoni C."/>
            <person name="Macino G."/>
            <person name="Catcheside D.E.A."/>
            <person name="Li W."/>
            <person name="Pratt R.J."/>
            <person name="Osmani S.A."/>
            <person name="DeSouza C.P.C."/>
            <person name="Glass N.L."/>
            <person name="Orbach M.J."/>
            <person name="Berglund J.A."/>
            <person name="Voelker R."/>
            <person name="Yarden O."/>
            <person name="Plamann M."/>
            <person name="Seiler S."/>
            <person name="Dunlap J.C."/>
            <person name="Radford A."/>
            <person name="Aramayo R."/>
            <person name="Natvig D.O."/>
            <person name="Alex L.A."/>
            <person name="Mannhaupt G."/>
            <person name="Ebbole D.J."/>
            <person name="Freitag M."/>
            <person name="Paulsen I."/>
            <person name="Sachs M.S."/>
            <person name="Lander E.S."/>
            <person name="Nusbaum C."/>
            <person name="Birren B.W."/>
        </authorList>
    </citation>
    <scope>NUCLEOTIDE SEQUENCE [LARGE SCALE GENOMIC DNA]</scope>
    <source>
        <strain>ATCC 24698 / 74-OR23-1A / CBS 708.71 / DSM 1257 / FGSC 987</strain>
    </source>
</reference>
<gene>
    <name type="primary">mch1</name>
    <name type="ORF">B15I20.030</name>
    <name type="ORF">NCU16534</name>
</gene>
<sequence>MASPTPAPRPDQISASTPLLQSDSTSSCASSIRSLSPSRRRHRNGRTSPAAAASARNLSFASALLSSLCAGSITIFSMYGHIFQERLHYTQFEVNGLSSAASFATYMPVPLLGYMCDRVGPGPLSFVSALFFAAGYGLAAGVYKREADGAALGNGADGEDTGRLAYAAMITAFVFIGVGTCSMYMSAVATCAKNFGRGKHRGLALAVPIAAFGLSGMWQSQLGSRVFYERFADGTKGDLDVFHFFIFLGVLLFVVGCLGTFGLKIVDEEDLIDEAVEELERSGYLDGSTFLQGSWTADRPGYGAIEQSPLDMESAGILDPSKPDNDSDSEEEDDNARIKKTWVLNAETRRFLTDHTMWCFALGFFLMIGPGEAFINNLGTVIKTLYPPHLKFVGEPTSAATHVSIVGITSTLVRLLTGSLTDLLAPSPQARHVQITSSGTLERKRFSLSRVSFLLFFAVTLSVGLATLASGWIQNHGERFWVASGLVGAGYGAVFSLTPIIITVIWGVENFATNWGIVAMFPALGATFWGLVYSAVYQSGVEKAASNGQGGEEDQFCYGSECYASAFWAMAASVWVACGLVLWAWKGKNGWAQRGIVV</sequence>
<evidence type="ECO:0000250" key="1"/>
<evidence type="ECO:0000255" key="2"/>
<evidence type="ECO:0000256" key="3">
    <source>
        <dbReference type="SAM" id="MobiDB-lite"/>
    </source>
</evidence>
<evidence type="ECO:0000305" key="4"/>
<dbReference type="EMBL" id="AL389900">
    <property type="protein sequence ID" value="CAB97457.1"/>
    <property type="molecule type" value="Genomic_DNA"/>
</dbReference>
<dbReference type="EMBL" id="CM002237">
    <property type="protein sequence ID" value="ESA43544.1"/>
    <property type="molecule type" value="Genomic_DNA"/>
</dbReference>
<dbReference type="PIR" id="T51033">
    <property type="entry name" value="T51033"/>
</dbReference>
<dbReference type="RefSeq" id="XP_011393677.1">
    <property type="nucleotide sequence ID" value="XM_011395375.1"/>
</dbReference>
<dbReference type="SMR" id="Q9P3K8"/>
<dbReference type="FunCoup" id="Q9P3K8">
    <property type="interactions" value="13"/>
</dbReference>
<dbReference type="GlyCosmos" id="Q9P3K8">
    <property type="glycosylation" value="2 sites, No reported glycans"/>
</dbReference>
<dbReference type="EnsemblFungi" id="ESA43544">
    <property type="protein sequence ID" value="ESA43544"/>
    <property type="gene ID" value="NCU16534"/>
</dbReference>
<dbReference type="GeneID" id="23569515"/>
<dbReference type="KEGG" id="ncr:NCU16534"/>
<dbReference type="VEuPathDB" id="FungiDB:NCU16534"/>
<dbReference type="HOGENOM" id="CLU_002761_1_0_1"/>
<dbReference type="InParanoid" id="Q9P3K8"/>
<dbReference type="OrthoDB" id="199930at2759"/>
<dbReference type="Proteomes" id="UP000001805">
    <property type="component" value="Chromosome 6, Linkage Group II"/>
</dbReference>
<dbReference type="GO" id="GO:0000329">
    <property type="term" value="C:fungal-type vacuole membrane"/>
    <property type="evidence" value="ECO:0000318"/>
    <property type="project" value="GO_Central"/>
</dbReference>
<dbReference type="GO" id="GO:0022857">
    <property type="term" value="F:transmembrane transporter activity"/>
    <property type="evidence" value="ECO:0007669"/>
    <property type="project" value="InterPro"/>
</dbReference>
<dbReference type="CDD" id="cd17354">
    <property type="entry name" value="MFS_Mch1p_like"/>
    <property type="match status" value="1"/>
</dbReference>
<dbReference type="Gene3D" id="1.20.1250.20">
    <property type="entry name" value="MFS general substrate transporter like domains"/>
    <property type="match status" value="1"/>
</dbReference>
<dbReference type="InterPro" id="IPR011701">
    <property type="entry name" value="MFS"/>
</dbReference>
<dbReference type="InterPro" id="IPR036259">
    <property type="entry name" value="MFS_trans_sf"/>
</dbReference>
<dbReference type="PANTHER" id="PTHR21576:SF45">
    <property type="entry name" value="TRANSPORTER MCH1-RELATED"/>
    <property type="match status" value="1"/>
</dbReference>
<dbReference type="PANTHER" id="PTHR21576">
    <property type="entry name" value="UNCHARACTERIZED NODULIN-LIKE PROTEIN"/>
    <property type="match status" value="1"/>
</dbReference>
<dbReference type="Pfam" id="PF07690">
    <property type="entry name" value="MFS_1"/>
    <property type="match status" value="1"/>
</dbReference>
<dbReference type="SUPFAM" id="SSF103473">
    <property type="entry name" value="MFS general substrate transporter"/>
    <property type="match status" value="1"/>
</dbReference>
<keyword id="KW-0325">Glycoprotein</keyword>
<keyword id="KW-0472">Membrane</keyword>
<keyword id="KW-1185">Reference proteome</keyword>
<keyword id="KW-0812">Transmembrane</keyword>
<keyword id="KW-1133">Transmembrane helix</keyword>
<keyword id="KW-0813">Transport</keyword>
<keyword id="KW-0926">Vacuole</keyword>
<protein>
    <recommendedName>
        <fullName>Probable transporter mch1</fullName>
    </recommendedName>
</protein>
<name>MCH1_NEUCR</name>